<protein>
    <recommendedName>
        <fullName>ER lumen protein-retaining receptor</fullName>
    </recommendedName>
</protein>
<accession>Q76NM1</accession>
<proteinExistence type="inferred from homology"/>
<evidence type="ECO:0000250" key="1"/>
<evidence type="ECO:0000255" key="2"/>
<evidence type="ECO:0000305" key="3"/>
<feature type="chain" id="PRO_0000194165" description="ER lumen protein-retaining receptor">
    <location>
        <begin position="1"/>
        <end position="221"/>
    </location>
</feature>
<feature type="topological domain" description="Lumenal" evidence="2">
    <location>
        <begin position="1"/>
        <end position="2"/>
    </location>
</feature>
<feature type="transmembrane region" description="Helical" evidence="2">
    <location>
        <begin position="3"/>
        <end position="21"/>
    </location>
</feature>
<feature type="topological domain" description="Cytoplasmic" evidence="2">
    <location>
        <begin position="22"/>
        <end position="35"/>
    </location>
</feature>
<feature type="transmembrane region" description="Helical" evidence="2">
    <location>
        <begin position="36"/>
        <end position="52"/>
    </location>
</feature>
<feature type="topological domain" description="Lumenal" evidence="2">
    <location>
        <begin position="53"/>
        <end position="61"/>
    </location>
</feature>
<feature type="transmembrane region" description="Helical" evidence="2">
    <location>
        <begin position="62"/>
        <end position="80"/>
    </location>
</feature>
<feature type="topological domain" description="Cytoplasmic" evidence="2">
    <location>
        <begin position="81"/>
        <end position="99"/>
    </location>
</feature>
<feature type="transmembrane region" description="Helical" evidence="2">
    <location>
        <begin position="100"/>
        <end position="113"/>
    </location>
</feature>
<feature type="topological domain" description="Lumenal" evidence="2">
    <location>
        <begin position="114"/>
        <end position="120"/>
    </location>
</feature>
<feature type="transmembrane region" description="Helical" evidence="2">
    <location>
        <begin position="121"/>
        <end position="140"/>
    </location>
</feature>
<feature type="topological domain" description="Cytoplasmic" evidence="2">
    <location>
        <begin position="141"/>
        <end position="152"/>
    </location>
</feature>
<feature type="transmembrane region" description="Helical" evidence="2">
    <location>
        <begin position="153"/>
        <end position="171"/>
    </location>
</feature>
<feature type="topological domain" description="Lumenal" evidence="2">
    <location>
        <begin position="172"/>
        <end position="183"/>
    </location>
</feature>
<feature type="transmembrane region" description="Helical" evidence="2">
    <location>
        <begin position="184"/>
        <end position="203"/>
    </location>
</feature>
<feature type="topological domain" description="Cytoplasmic" evidence="2">
    <location>
        <begin position="204"/>
        <end position="221"/>
    </location>
</feature>
<keyword id="KW-0256">Endoplasmic reticulum</keyword>
<keyword id="KW-0931">ER-Golgi transport</keyword>
<keyword id="KW-0472">Membrane</keyword>
<keyword id="KW-0653">Protein transport</keyword>
<keyword id="KW-0675">Receptor</keyword>
<keyword id="KW-1185">Reference proteome</keyword>
<keyword id="KW-0812">Transmembrane</keyword>
<keyword id="KW-1133">Transmembrane helix</keyword>
<keyword id="KW-0813">Transport</keyword>
<dbReference type="EMBL" id="AL844509">
    <property type="protein sequence ID" value="CAD52657.1"/>
    <property type="molecule type" value="Genomic_DNA"/>
</dbReference>
<dbReference type="RefSeq" id="XP_001350248.1">
    <property type="nucleotide sequence ID" value="XM_001350212.1"/>
</dbReference>
<dbReference type="SMR" id="Q76NM1"/>
<dbReference type="FunCoup" id="Q76NM1">
    <property type="interactions" value="129"/>
</dbReference>
<dbReference type="STRING" id="36329.Q76NM1"/>
<dbReference type="PaxDb" id="5833-PF13_0280"/>
<dbReference type="EnsemblProtists" id="CAD52657">
    <property type="protein sequence ID" value="CAD52657"/>
    <property type="gene ID" value="PF3D7_1353600"/>
</dbReference>
<dbReference type="KEGG" id="pfa:PF3D7_1353600"/>
<dbReference type="VEuPathDB" id="PlasmoDB:PF3D7_1353600"/>
<dbReference type="HOGENOM" id="CLU_057784_0_0_1"/>
<dbReference type="InParanoid" id="Q76NM1"/>
<dbReference type="OMA" id="WKSRSCE"/>
<dbReference type="OrthoDB" id="7694678at2759"/>
<dbReference type="PhylomeDB" id="Q76NM1"/>
<dbReference type="Reactome" id="R-PFA-6811434">
    <property type="pathway name" value="COPI-dependent Golgi-to-ER retrograde traffic"/>
</dbReference>
<dbReference type="Proteomes" id="UP000001450">
    <property type="component" value="Chromosome 13"/>
</dbReference>
<dbReference type="GO" id="GO:0005801">
    <property type="term" value="C:cis-Golgi network"/>
    <property type="evidence" value="ECO:0000314"/>
    <property type="project" value="GeneDB"/>
</dbReference>
<dbReference type="GO" id="GO:0005783">
    <property type="term" value="C:endoplasmic reticulum"/>
    <property type="evidence" value="ECO:0000318"/>
    <property type="project" value="GO_Central"/>
</dbReference>
<dbReference type="GO" id="GO:0005789">
    <property type="term" value="C:endoplasmic reticulum membrane"/>
    <property type="evidence" value="ECO:0007669"/>
    <property type="project" value="UniProtKB-SubCell"/>
</dbReference>
<dbReference type="GO" id="GO:0005794">
    <property type="term" value="C:Golgi apparatus"/>
    <property type="evidence" value="ECO:0000314"/>
    <property type="project" value="GeneDB"/>
</dbReference>
<dbReference type="GO" id="GO:0046923">
    <property type="term" value="F:ER retention sequence binding"/>
    <property type="evidence" value="ECO:0000318"/>
    <property type="project" value="GO_Central"/>
</dbReference>
<dbReference type="GO" id="GO:0005046">
    <property type="term" value="F:KDEL sequence binding"/>
    <property type="evidence" value="ECO:0000250"/>
    <property type="project" value="GeneDB"/>
</dbReference>
<dbReference type="GO" id="GO:0038023">
    <property type="term" value="F:signaling receptor activity"/>
    <property type="evidence" value="ECO:0000303"/>
    <property type="project" value="GeneDB"/>
</dbReference>
<dbReference type="GO" id="GO:0006621">
    <property type="term" value="P:protein retention in ER lumen"/>
    <property type="evidence" value="ECO:0000318"/>
    <property type="project" value="GO_Central"/>
</dbReference>
<dbReference type="GO" id="GO:0015031">
    <property type="term" value="P:protein transport"/>
    <property type="evidence" value="ECO:0007669"/>
    <property type="project" value="UniProtKB-KW"/>
</dbReference>
<dbReference type="GO" id="GO:0016192">
    <property type="term" value="P:vesicle-mediated transport"/>
    <property type="evidence" value="ECO:0007669"/>
    <property type="project" value="UniProtKB-KW"/>
</dbReference>
<dbReference type="InterPro" id="IPR000133">
    <property type="entry name" value="ER_ret_rcpt"/>
</dbReference>
<dbReference type="PANTHER" id="PTHR10585">
    <property type="entry name" value="ER LUMEN PROTEIN RETAINING RECEPTOR"/>
    <property type="match status" value="1"/>
</dbReference>
<dbReference type="Pfam" id="PF00810">
    <property type="entry name" value="ER_lumen_recept"/>
    <property type="match status" value="1"/>
</dbReference>
<dbReference type="PRINTS" id="PR00660">
    <property type="entry name" value="ERLUMENR"/>
</dbReference>
<dbReference type="PROSITE" id="PS00951">
    <property type="entry name" value="ER_LUMEN_RECEPTOR_1"/>
    <property type="match status" value="1"/>
</dbReference>
<dbReference type="PROSITE" id="PS00952">
    <property type="entry name" value="ER_LUMEN_RECEPTOR_2"/>
    <property type="match status" value="1"/>
</dbReference>
<comment type="function">
    <text evidence="1">Required for the retention of luminal endoplasmic reticulum proteins. Determines the specificity of the luminal ER protein retention system. Also required for normal vesicular traffic through the Golgi (By similarity).</text>
</comment>
<comment type="subcellular location">
    <subcellularLocation>
        <location>Endoplasmic reticulum membrane</location>
        <topology>Multi-pass membrane protein</topology>
    </subcellularLocation>
</comment>
<comment type="similarity">
    <text evidence="3">Belongs to the ERD2 family.</text>
</comment>
<gene>
    <name type="primary">ERD2</name>
    <name type="ORF">PF13_0280</name>
</gene>
<sequence length="221" mass="26447">MNIFRLIGDILHLVSMYILIMKLKKSKNCIGISCRMQELYLIVFLCRYIDLFFVFVSFYNTVMKITFILTIAYTIYLIRLKLPISQTYNRKVDNFKSEKYLIPPCLVLSLLTCKTYNLYNILWSFSIWLESVAILPQLVLLEKQREVENITSHYVITMGLYRAFYILNWIYRYFFDDKPYINVVGWIGGLIQTLLYIDFFYYFALAKWYGKKLVLPFNGEV</sequence>
<name>ERD2_PLAF7</name>
<organism>
    <name type="scientific">Plasmodium falciparum (isolate 3D7)</name>
    <dbReference type="NCBI Taxonomy" id="36329"/>
    <lineage>
        <taxon>Eukaryota</taxon>
        <taxon>Sar</taxon>
        <taxon>Alveolata</taxon>
        <taxon>Apicomplexa</taxon>
        <taxon>Aconoidasida</taxon>
        <taxon>Haemosporida</taxon>
        <taxon>Plasmodiidae</taxon>
        <taxon>Plasmodium</taxon>
        <taxon>Plasmodium (Laverania)</taxon>
    </lineage>
</organism>
<reference key="1">
    <citation type="journal article" date="2002" name="Nature">
        <title>Genome sequence of the human malaria parasite Plasmodium falciparum.</title>
        <authorList>
            <person name="Gardner M.J."/>
            <person name="Hall N."/>
            <person name="Fung E."/>
            <person name="White O."/>
            <person name="Berriman M."/>
            <person name="Hyman R.W."/>
            <person name="Carlton J.M."/>
            <person name="Pain A."/>
            <person name="Nelson K.E."/>
            <person name="Bowman S."/>
            <person name="Paulsen I.T."/>
            <person name="James K.D."/>
            <person name="Eisen J.A."/>
            <person name="Rutherford K.M."/>
            <person name="Salzberg S.L."/>
            <person name="Craig A."/>
            <person name="Kyes S."/>
            <person name="Chan M.-S."/>
            <person name="Nene V."/>
            <person name="Shallom S.J."/>
            <person name="Suh B."/>
            <person name="Peterson J."/>
            <person name="Angiuoli S."/>
            <person name="Pertea M."/>
            <person name="Allen J."/>
            <person name="Selengut J."/>
            <person name="Haft D."/>
            <person name="Mather M.W."/>
            <person name="Vaidya A.B."/>
            <person name="Martin D.M.A."/>
            <person name="Fairlamb A.H."/>
            <person name="Fraunholz M.J."/>
            <person name="Roos D.S."/>
            <person name="Ralph S.A."/>
            <person name="McFadden G.I."/>
            <person name="Cummings L.M."/>
            <person name="Subramanian G.M."/>
            <person name="Mungall C."/>
            <person name="Venter J.C."/>
            <person name="Carucci D.J."/>
            <person name="Hoffman S.L."/>
            <person name="Newbold C."/>
            <person name="Davis R.W."/>
            <person name="Fraser C.M."/>
            <person name="Barrell B.G."/>
        </authorList>
    </citation>
    <scope>NUCLEOTIDE SEQUENCE [LARGE SCALE GENOMIC DNA]</scope>
    <source>
        <strain>3D7</strain>
    </source>
</reference>
<reference key="2">
    <citation type="journal article" date="2002" name="Nature">
        <title>Sequence of Plasmodium falciparum chromosomes 1, 3-9 and 13.</title>
        <authorList>
            <person name="Hall N."/>
            <person name="Pain A."/>
            <person name="Berriman M."/>
            <person name="Churcher C.M."/>
            <person name="Harris B."/>
            <person name="Harris D."/>
            <person name="Mungall K.L."/>
            <person name="Bowman S."/>
            <person name="Atkin R."/>
            <person name="Baker S."/>
            <person name="Barron A."/>
            <person name="Brooks K."/>
            <person name="Buckee C.O."/>
            <person name="Burrows C."/>
            <person name="Cherevach I."/>
            <person name="Chillingworth C."/>
            <person name="Chillingworth T."/>
            <person name="Christodoulou Z."/>
            <person name="Clark L."/>
            <person name="Clark R."/>
            <person name="Corton C."/>
            <person name="Cronin A."/>
            <person name="Davies R.M."/>
            <person name="Davis P."/>
            <person name="Dear P."/>
            <person name="Dearden F."/>
            <person name="Doggett J."/>
            <person name="Feltwell T."/>
            <person name="Goble A."/>
            <person name="Goodhead I."/>
            <person name="Gwilliam R."/>
            <person name="Hamlin N."/>
            <person name="Hance Z."/>
            <person name="Harper D."/>
            <person name="Hauser H."/>
            <person name="Hornsby T."/>
            <person name="Holroyd S."/>
            <person name="Horrocks P."/>
            <person name="Humphray S."/>
            <person name="Jagels K."/>
            <person name="James K.D."/>
            <person name="Johnson D."/>
            <person name="Kerhornou A."/>
            <person name="Knights A."/>
            <person name="Konfortov B."/>
            <person name="Kyes S."/>
            <person name="Larke N."/>
            <person name="Lawson D."/>
            <person name="Lennard N."/>
            <person name="Line A."/>
            <person name="Maddison M."/>
            <person name="Mclean J."/>
            <person name="Mooney P."/>
            <person name="Moule S."/>
            <person name="Murphy L."/>
            <person name="Oliver K."/>
            <person name="Ormond D."/>
            <person name="Price C."/>
            <person name="Quail M.A."/>
            <person name="Rabbinowitsch E."/>
            <person name="Rajandream M.A."/>
            <person name="Rutter S."/>
            <person name="Rutherford K.M."/>
            <person name="Sanders M."/>
            <person name="Simmonds M."/>
            <person name="Seeger K."/>
            <person name="Sharp S."/>
            <person name="Smith R."/>
            <person name="Squares R."/>
            <person name="Squares S."/>
            <person name="Stevens K."/>
            <person name="Taylor K."/>
            <person name="Tivey A."/>
            <person name="Unwin L."/>
            <person name="Whitehead S."/>
            <person name="Woodward J.R."/>
            <person name="Sulston J.E."/>
            <person name="Craig A."/>
            <person name="Newbold C."/>
            <person name="Barrell B.G."/>
        </authorList>
    </citation>
    <scope>NUCLEOTIDE SEQUENCE [LARGE SCALE GENOMIC DNA]</scope>
    <source>
        <strain>3D7</strain>
    </source>
</reference>